<comment type="subcellular location">
    <subcellularLocation>
        <location evidence="6">Secreted</location>
    </subcellularLocation>
    <text evidence="4">Prediction of a peroxisomal location.</text>
</comment>
<comment type="disruption phenotype">
    <text evidence="5">No visible phenotype.</text>
</comment>
<comment type="similarity">
    <text evidence="6">Belongs to the peptidase A1 family.</text>
</comment>
<dbReference type="EC" id="3.4.-.-"/>
<dbReference type="EMBL" id="AC006068">
    <property type="status" value="NOT_ANNOTATED_CDS"/>
    <property type="molecule type" value="Genomic_DNA"/>
</dbReference>
<dbReference type="EMBL" id="CP002685">
    <property type="protein sequence ID" value="AEC09130.1"/>
    <property type="molecule type" value="Genomic_DNA"/>
</dbReference>
<dbReference type="RefSeq" id="NP_850251.1">
    <property type="nucleotide sequence ID" value="NM_179920.2"/>
</dbReference>
<dbReference type="SMR" id="Q3EBM5"/>
<dbReference type="FunCoup" id="Q3EBM5">
    <property type="interactions" value="3"/>
</dbReference>
<dbReference type="STRING" id="3702.Q3EBM5"/>
<dbReference type="MEROPS" id="A01.A22"/>
<dbReference type="GlyGen" id="Q3EBM5">
    <property type="glycosylation" value="2 sites"/>
</dbReference>
<dbReference type="PaxDb" id="3702-AT2G35615.1"/>
<dbReference type="ProteomicsDB" id="246805"/>
<dbReference type="EnsemblPlants" id="AT2G35615.1">
    <property type="protein sequence ID" value="AT2G35615.1"/>
    <property type="gene ID" value="AT2G35615"/>
</dbReference>
<dbReference type="GeneID" id="818129"/>
<dbReference type="Gramene" id="AT2G35615.1">
    <property type="protein sequence ID" value="AT2G35615.1"/>
    <property type="gene ID" value="AT2G35615"/>
</dbReference>
<dbReference type="KEGG" id="ath:AT2G35615"/>
<dbReference type="Araport" id="AT2G35615"/>
<dbReference type="TAIR" id="AT2G35615"/>
<dbReference type="eggNOG" id="KOG1339">
    <property type="taxonomic scope" value="Eukaryota"/>
</dbReference>
<dbReference type="HOGENOM" id="CLU_005738_1_3_1"/>
<dbReference type="InParanoid" id="Q3EBM5"/>
<dbReference type="OMA" id="GCDEAKN"/>
<dbReference type="PhylomeDB" id="Q3EBM5"/>
<dbReference type="PRO" id="PR:Q3EBM5"/>
<dbReference type="Proteomes" id="UP000006548">
    <property type="component" value="Chromosome 2"/>
</dbReference>
<dbReference type="ExpressionAtlas" id="Q3EBM5">
    <property type="expression patterns" value="baseline"/>
</dbReference>
<dbReference type="GO" id="GO:0005576">
    <property type="term" value="C:extracellular region"/>
    <property type="evidence" value="ECO:0000314"/>
    <property type="project" value="TAIR"/>
</dbReference>
<dbReference type="GO" id="GO:0004190">
    <property type="term" value="F:aspartic-type endopeptidase activity"/>
    <property type="evidence" value="ECO:0007669"/>
    <property type="project" value="UniProtKB-KW"/>
</dbReference>
<dbReference type="GO" id="GO:0004175">
    <property type="term" value="F:endopeptidase activity"/>
    <property type="evidence" value="ECO:0000314"/>
    <property type="project" value="TAIR"/>
</dbReference>
<dbReference type="GO" id="GO:0010183">
    <property type="term" value="P:pollen tube guidance"/>
    <property type="evidence" value="ECO:0000316"/>
    <property type="project" value="TAIR"/>
</dbReference>
<dbReference type="GO" id="GO:0006508">
    <property type="term" value="P:proteolysis"/>
    <property type="evidence" value="ECO:0007669"/>
    <property type="project" value="UniProtKB-KW"/>
</dbReference>
<dbReference type="CDD" id="cd05476">
    <property type="entry name" value="pepsin_A_like_plant"/>
    <property type="match status" value="1"/>
</dbReference>
<dbReference type="FunFam" id="2.40.70.10:FF:000050">
    <property type="entry name" value="Aspartic proteinase CDR1"/>
    <property type="match status" value="1"/>
</dbReference>
<dbReference type="FunFam" id="2.40.70.10:FF:000016">
    <property type="entry name" value="Probable aspartic protease At2g35615"/>
    <property type="match status" value="1"/>
</dbReference>
<dbReference type="Gene3D" id="2.40.70.10">
    <property type="entry name" value="Acid Proteases"/>
    <property type="match status" value="2"/>
</dbReference>
<dbReference type="InterPro" id="IPR001969">
    <property type="entry name" value="Aspartic_peptidase_AS"/>
</dbReference>
<dbReference type="InterPro" id="IPR034161">
    <property type="entry name" value="Pepsin-like_plant"/>
</dbReference>
<dbReference type="InterPro" id="IPR033121">
    <property type="entry name" value="PEPTIDASE_A1"/>
</dbReference>
<dbReference type="InterPro" id="IPR021109">
    <property type="entry name" value="Peptidase_aspartic_dom_sf"/>
</dbReference>
<dbReference type="InterPro" id="IPR051708">
    <property type="entry name" value="Plant_Aspart_Prot_A1"/>
</dbReference>
<dbReference type="InterPro" id="IPR032799">
    <property type="entry name" value="TAXi_C"/>
</dbReference>
<dbReference type="InterPro" id="IPR032861">
    <property type="entry name" value="TAXi_N"/>
</dbReference>
<dbReference type="PANTHER" id="PTHR47967:SF128">
    <property type="entry name" value="ASPARTIC PROTEINASE CDR1-LIKE"/>
    <property type="match status" value="1"/>
</dbReference>
<dbReference type="PANTHER" id="PTHR47967">
    <property type="entry name" value="OS07G0603500 PROTEIN-RELATED"/>
    <property type="match status" value="1"/>
</dbReference>
<dbReference type="Pfam" id="PF14541">
    <property type="entry name" value="TAXi_C"/>
    <property type="match status" value="1"/>
</dbReference>
<dbReference type="Pfam" id="PF14543">
    <property type="entry name" value="TAXi_N"/>
    <property type="match status" value="1"/>
</dbReference>
<dbReference type="SUPFAM" id="SSF50630">
    <property type="entry name" value="Acid proteases"/>
    <property type="match status" value="1"/>
</dbReference>
<dbReference type="PROSITE" id="PS00141">
    <property type="entry name" value="ASP_PROTEASE"/>
    <property type="match status" value="2"/>
</dbReference>
<dbReference type="PROSITE" id="PS51767">
    <property type="entry name" value="PEPTIDASE_A1"/>
    <property type="match status" value="1"/>
</dbReference>
<feature type="signal peptide" evidence="1">
    <location>
        <begin position="1"/>
        <end position="20"/>
    </location>
</feature>
<feature type="chain" id="PRO_0000405232" description="Probable aspartic protease At2g35615">
    <location>
        <begin position="21"/>
        <end position="447"/>
    </location>
</feature>
<feature type="domain" description="Peptidase A1" evidence="2">
    <location>
        <begin position="85"/>
        <end position="439"/>
    </location>
</feature>
<feature type="active site" evidence="3">
    <location>
        <position position="103"/>
    </location>
</feature>
<feature type="active site" evidence="3">
    <location>
        <position position="326"/>
    </location>
</feature>
<feature type="glycosylation site" description="N-linked (GlcNAc...) asparagine" evidence="1">
    <location>
        <position position="25"/>
    </location>
</feature>
<feature type="glycosylation site" description="N-linked (GlcNAc...) asparagine" evidence="1">
    <location>
        <position position="251"/>
    </location>
</feature>
<proteinExistence type="inferred from homology"/>
<name>ASPR1_ARATH</name>
<evidence type="ECO:0000255" key="1"/>
<evidence type="ECO:0000255" key="2">
    <source>
        <dbReference type="PROSITE-ProRule" id="PRU01103"/>
    </source>
</evidence>
<evidence type="ECO:0000255" key="3">
    <source>
        <dbReference type="PROSITE-ProRule" id="PRU10094"/>
    </source>
</evidence>
<evidence type="ECO:0000269" key="4">
    <source>
    </source>
</evidence>
<evidence type="ECO:0000269" key="5">
    <source>
    </source>
</evidence>
<evidence type="ECO:0000305" key="6"/>
<accession>Q3EBM5</accession>
<protein>
    <recommendedName>
        <fullName>Probable aspartic protease At2g35615</fullName>
        <ecNumber>3.4.-.-</ecNumber>
    </recommendedName>
</protein>
<gene>
    <name type="ordered locus">At2g35615</name>
    <name type="ORF">T20F21</name>
</gene>
<organism>
    <name type="scientific">Arabidopsis thaliana</name>
    <name type="common">Mouse-ear cress</name>
    <dbReference type="NCBI Taxonomy" id="3702"/>
    <lineage>
        <taxon>Eukaryota</taxon>
        <taxon>Viridiplantae</taxon>
        <taxon>Streptophyta</taxon>
        <taxon>Embryophyta</taxon>
        <taxon>Tracheophyta</taxon>
        <taxon>Spermatophyta</taxon>
        <taxon>Magnoliopsida</taxon>
        <taxon>eudicotyledons</taxon>
        <taxon>Gunneridae</taxon>
        <taxon>Pentapetalae</taxon>
        <taxon>rosids</taxon>
        <taxon>malvids</taxon>
        <taxon>Brassicales</taxon>
        <taxon>Brassicaceae</taxon>
        <taxon>Camelineae</taxon>
        <taxon>Arabidopsis</taxon>
    </lineage>
</organism>
<keyword id="KW-0064">Aspartyl protease</keyword>
<keyword id="KW-0325">Glycoprotein</keyword>
<keyword id="KW-0378">Hydrolase</keyword>
<keyword id="KW-0645">Protease</keyword>
<keyword id="KW-1185">Reference proteome</keyword>
<keyword id="KW-0677">Repeat</keyword>
<keyword id="KW-0964">Secreted</keyword>
<keyword id="KW-0732">Signal</keyword>
<reference key="1">
    <citation type="journal article" date="1999" name="Nature">
        <title>Sequence and analysis of chromosome 2 of the plant Arabidopsis thaliana.</title>
        <authorList>
            <person name="Lin X."/>
            <person name="Kaul S."/>
            <person name="Rounsley S.D."/>
            <person name="Shea T.P."/>
            <person name="Benito M.-I."/>
            <person name="Town C.D."/>
            <person name="Fujii C.Y."/>
            <person name="Mason T.M."/>
            <person name="Bowman C.L."/>
            <person name="Barnstead M.E."/>
            <person name="Feldblyum T.V."/>
            <person name="Buell C.R."/>
            <person name="Ketchum K.A."/>
            <person name="Lee J.J."/>
            <person name="Ronning C.M."/>
            <person name="Koo H.L."/>
            <person name="Moffat K.S."/>
            <person name="Cronin L.A."/>
            <person name="Shen M."/>
            <person name="Pai G."/>
            <person name="Van Aken S."/>
            <person name="Umayam L."/>
            <person name="Tallon L.J."/>
            <person name="Gill J.E."/>
            <person name="Adams M.D."/>
            <person name="Carrera A.J."/>
            <person name="Creasy T.H."/>
            <person name="Goodman H.M."/>
            <person name="Somerville C.R."/>
            <person name="Copenhaver G.P."/>
            <person name="Preuss D."/>
            <person name="Nierman W.C."/>
            <person name="White O."/>
            <person name="Eisen J.A."/>
            <person name="Salzberg S.L."/>
            <person name="Fraser C.M."/>
            <person name="Venter J.C."/>
        </authorList>
    </citation>
    <scope>NUCLEOTIDE SEQUENCE [LARGE SCALE GENOMIC DNA]</scope>
    <source>
        <strain>cv. Columbia</strain>
    </source>
</reference>
<reference key="2">
    <citation type="journal article" date="2017" name="Plant J.">
        <title>Araport11: a complete reannotation of the Arabidopsis thaliana reference genome.</title>
        <authorList>
            <person name="Cheng C.Y."/>
            <person name="Krishnakumar V."/>
            <person name="Chan A.P."/>
            <person name="Thibaud-Nissen F."/>
            <person name="Schobel S."/>
            <person name="Town C.D."/>
        </authorList>
    </citation>
    <scope>GENOME REANNOTATION</scope>
    <source>
        <strain>cv. Columbia</strain>
    </source>
</reference>
<reference key="3">
    <citation type="journal article" date="2004" name="Plant Physiol.">
        <title>AraPerox. A database of putative Arabidopsis proteins from plant peroxisomes.</title>
        <authorList>
            <person name="Reumann S."/>
            <person name="Ma C."/>
            <person name="Lemke S."/>
            <person name="Babujee L."/>
        </authorList>
    </citation>
    <scope>PREDICTION</scope>
</reference>
<reference key="4">
    <citation type="journal article" date="2009" name="Plant Physiol.">
        <title>Arabidopsis LON2 is necessary for peroxisomal function and sustained matrix protein import.</title>
        <authorList>
            <person name="Lingard M.J."/>
            <person name="Bartel B."/>
        </authorList>
    </citation>
    <scope>DISRUPTION PHENOTYPE</scope>
</reference>
<sequence>MATQILLCFFLFFSVTLSSSGHPKNFSVELIHRDSPLSPIYNPQITVTDRLNAAFLRSVSRSRRFNHQLSQTDLQSGLIGADGEFFMSITIGTPPIKVFAIADTGSDLTWVQCKPCQQCYKENGPIFDKKKSSTYKSEPCDSRNCQALSSTERGCDESNNICKYRYSYGDQSFSKGDVATETVSIDSASGSPVSFPGTVFGCGYNNGGTFDETGSGIIGLGGGHLSLISQLGSSISKKFSYCLSHKSATTNGTSVINLGTNSIPSSLSKDSGVVSTPLVDKEPLTYYYLTLEAISVGKKKIPYTGSSYNPNDDGILSETSGNIIIDSGTTLTLLEAGFFDKFSSAVEESVTGAKRVSDPQGLLSHCFKSGSAEIGLPEITVHFTGADVRLSPINAFVKLSEDMVCLSMVPTTEVAIYGNFAQMDFLVGYDLETRTVSFQHMDCSANL</sequence>